<dbReference type="EC" id="4.1.99.22" evidence="1"/>
<dbReference type="EMBL" id="AL123456">
    <property type="protein sequence ID" value="CCP45919.1"/>
    <property type="molecule type" value="Genomic_DNA"/>
</dbReference>
<dbReference type="PIR" id="D70920">
    <property type="entry name" value="D70920"/>
</dbReference>
<dbReference type="RefSeq" id="WP_003900633.1">
    <property type="nucleotide sequence ID" value="NZ_NVQJ01000011.1"/>
</dbReference>
<dbReference type="RefSeq" id="YP_177925.1">
    <property type="nucleotide sequence ID" value="NC_000962.3"/>
</dbReference>
<dbReference type="SMR" id="P9WJS3"/>
<dbReference type="FunCoup" id="P9WJS3">
    <property type="interactions" value="321"/>
</dbReference>
<dbReference type="STRING" id="83332.Rv3109"/>
<dbReference type="PaxDb" id="83332-Rv3109"/>
<dbReference type="DNASU" id="888836"/>
<dbReference type="GeneID" id="45427108"/>
<dbReference type="GeneID" id="888836"/>
<dbReference type="KEGG" id="mtu:Rv3109"/>
<dbReference type="KEGG" id="mtv:RVBD_3109"/>
<dbReference type="TubercuList" id="Rv3109"/>
<dbReference type="eggNOG" id="COG2896">
    <property type="taxonomic scope" value="Bacteria"/>
</dbReference>
<dbReference type="InParanoid" id="P9WJS3"/>
<dbReference type="OrthoDB" id="9763993at2"/>
<dbReference type="PhylomeDB" id="P9WJS3"/>
<dbReference type="UniPathway" id="UPA00344"/>
<dbReference type="PHI-base" id="PHI:7746"/>
<dbReference type="Proteomes" id="UP000001584">
    <property type="component" value="Chromosome"/>
</dbReference>
<dbReference type="GO" id="GO:0005886">
    <property type="term" value="C:plasma membrane"/>
    <property type="evidence" value="ECO:0007005"/>
    <property type="project" value="MTBBASE"/>
</dbReference>
<dbReference type="GO" id="GO:0051539">
    <property type="term" value="F:4 iron, 4 sulfur cluster binding"/>
    <property type="evidence" value="ECO:0007669"/>
    <property type="project" value="UniProtKB-UniRule"/>
</dbReference>
<dbReference type="GO" id="GO:0061799">
    <property type="term" value="F:cyclic pyranopterin monophosphate synthase activity"/>
    <property type="evidence" value="ECO:0000318"/>
    <property type="project" value="GO_Central"/>
</dbReference>
<dbReference type="GO" id="GO:0061798">
    <property type="term" value="F:GTP 3',8'-cyclase activity"/>
    <property type="evidence" value="ECO:0000318"/>
    <property type="project" value="GO_Central"/>
</dbReference>
<dbReference type="GO" id="GO:0005525">
    <property type="term" value="F:GTP binding"/>
    <property type="evidence" value="ECO:0007669"/>
    <property type="project" value="UniProtKB-UniRule"/>
</dbReference>
<dbReference type="GO" id="GO:0046872">
    <property type="term" value="F:metal ion binding"/>
    <property type="evidence" value="ECO:0007669"/>
    <property type="project" value="UniProtKB-KW"/>
</dbReference>
<dbReference type="GO" id="GO:1904047">
    <property type="term" value="F:S-adenosyl-L-methionine binding"/>
    <property type="evidence" value="ECO:0007669"/>
    <property type="project" value="UniProtKB-UniRule"/>
</dbReference>
<dbReference type="GO" id="GO:0006777">
    <property type="term" value="P:Mo-molybdopterin cofactor biosynthetic process"/>
    <property type="evidence" value="ECO:0000318"/>
    <property type="project" value="GO_Central"/>
</dbReference>
<dbReference type="CDD" id="cd01335">
    <property type="entry name" value="Radical_SAM"/>
    <property type="match status" value="1"/>
</dbReference>
<dbReference type="CDD" id="cd21117">
    <property type="entry name" value="Twitch_MoaA"/>
    <property type="match status" value="1"/>
</dbReference>
<dbReference type="FunFam" id="3.20.20.70:FF:000333">
    <property type="entry name" value="GTP 3',8-cyclase 1"/>
    <property type="match status" value="1"/>
</dbReference>
<dbReference type="Gene3D" id="3.20.20.70">
    <property type="entry name" value="Aldolase class I"/>
    <property type="match status" value="1"/>
</dbReference>
<dbReference type="HAMAP" id="MF_01225_B">
    <property type="entry name" value="MoaA_B"/>
    <property type="match status" value="1"/>
</dbReference>
<dbReference type="InterPro" id="IPR013785">
    <property type="entry name" value="Aldolase_TIM"/>
</dbReference>
<dbReference type="InterPro" id="IPR006638">
    <property type="entry name" value="Elp3/MiaA/NifB-like_rSAM"/>
</dbReference>
<dbReference type="InterPro" id="IPR013483">
    <property type="entry name" value="MoaA"/>
</dbReference>
<dbReference type="InterPro" id="IPR000385">
    <property type="entry name" value="MoaA_NifB_PqqE_Fe-S-bd_CS"/>
</dbReference>
<dbReference type="InterPro" id="IPR010505">
    <property type="entry name" value="MoaA_twitch"/>
</dbReference>
<dbReference type="InterPro" id="IPR050105">
    <property type="entry name" value="MoCo_biosynth_MoaA/MoaC"/>
</dbReference>
<dbReference type="InterPro" id="IPR007197">
    <property type="entry name" value="rSAM"/>
</dbReference>
<dbReference type="NCBIfam" id="TIGR02666">
    <property type="entry name" value="moaA"/>
    <property type="match status" value="1"/>
</dbReference>
<dbReference type="PANTHER" id="PTHR22960:SF0">
    <property type="entry name" value="MOLYBDENUM COFACTOR BIOSYNTHESIS PROTEIN 1"/>
    <property type="match status" value="1"/>
</dbReference>
<dbReference type="PANTHER" id="PTHR22960">
    <property type="entry name" value="MOLYBDOPTERIN COFACTOR SYNTHESIS PROTEIN A"/>
    <property type="match status" value="1"/>
</dbReference>
<dbReference type="Pfam" id="PF06463">
    <property type="entry name" value="Mob_synth_C"/>
    <property type="match status" value="1"/>
</dbReference>
<dbReference type="Pfam" id="PF04055">
    <property type="entry name" value="Radical_SAM"/>
    <property type="match status" value="1"/>
</dbReference>
<dbReference type="SFLD" id="SFLDG01383">
    <property type="entry name" value="cyclic_pyranopterin_phosphate"/>
    <property type="match status" value="1"/>
</dbReference>
<dbReference type="SFLD" id="SFLDG01216">
    <property type="entry name" value="thioether_bond_formation_requi"/>
    <property type="match status" value="1"/>
</dbReference>
<dbReference type="SMART" id="SM00729">
    <property type="entry name" value="Elp3"/>
    <property type="match status" value="1"/>
</dbReference>
<dbReference type="SUPFAM" id="SSF102114">
    <property type="entry name" value="Radical SAM enzymes"/>
    <property type="match status" value="1"/>
</dbReference>
<dbReference type="PROSITE" id="PS01305">
    <property type="entry name" value="MOAA_NIFB_PQQE"/>
    <property type="match status" value="1"/>
</dbReference>
<dbReference type="PROSITE" id="PS51918">
    <property type="entry name" value="RADICAL_SAM"/>
    <property type="match status" value="1"/>
</dbReference>
<accession>P9WJS3</accession>
<accession>L0TEC9</accession>
<accession>O05786</accession>
<proteinExistence type="evidence at transcript level"/>
<protein>
    <recommendedName>
        <fullName evidence="1">GTP 3',8-cyclase 1</fullName>
        <ecNumber evidence="1">4.1.99.22</ecNumber>
    </recommendedName>
    <alternativeName>
        <fullName evidence="1">Molybdenum cofactor biosynthesis protein A 1</fullName>
    </alternativeName>
</protein>
<organism>
    <name type="scientific">Mycobacterium tuberculosis (strain ATCC 25618 / H37Rv)</name>
    <dbReference type="NCBI Taxonomy" id="83332"/>
    <lineage>
        <taxon>Bacteria</taxon>
        <taxon>Bacillati</taxon>
        <taxon>Actinomycetota</taxon>
        <taxon>Actinomycetes</taxon>
        <taxon>Mycobacteriales</taxon>
        <taxon>Mycobacteriaceae</taxon>
        <taxon>Mycobacterium</taxon>
        <taxon>Mycobacterium tuberculosis complex</taxon>
    </lineage>
</organism>
<sequence>MSTPTLPDMVAPSPRVRVKDRCRRMMGDLRLSVIDQCNLRCRYCMPEEHYTWLPRQDLLSVKEISAIVDVFLSVGVSKVRITGGEPLIRPDLPEIVRTLSAKVGEDSGLRDLAITTNGVLLADRVDGLKAAGMKRITVSLDTLQPERFKAISQRNSHDKVIAGIKAVAAAGFTDTKIDTTVMRGANHDELADLIEFARTVNAEVRFIEYMDVGGATHWAWEKVFTKANMLESLEKRYGRIEPLPKHDTAPANRYALPDGTTFGIIASTTEPFCATCDRSRLTADGLWLHCLYAISGINLREPLRAGATHDDLVETVTTGWRRRTDRGAEQRLAQRERGVFLPLSTLKADPHLEMHTRGG</sequence>
<reference key="1">
    <citation type="journal article" date="1998" name="Nature">
        <title>Deciphering the biology of Mycobacterium tuberculosis from the complete genome sequence.</title>
        <authorList>
            <person name="Cole S.T."/>
            <person name="Brosch R."/>
            <person name="Parkhill J."/>
            <person name="Garnier T."/>
            <person name="Churcher C.M."/>
            <person name="Harris D.E."/>
            <person name="Gordon S.V."/>
            <person name="Eiglmeier K."/>
            <person name="Gas S."/>
            <person name="Barry C.E. III"/>
            <person name="Tekaia F."/>
            <person name="Badcock K."/>
            <person name="Basham D."/>
            <person name="Brown D."/>
            <person name="Chillingworth T."/>
            <person name="Connor R."/>
            <person name="Davies R.M."/>
            <person name="Devlin K."/>
            <person name="Feltwell T."/>
            <person name="Gentles S."/>
            <person name="Hamlin N."/>
            <person name="Holroyd S."/>
            <person name="Hornsby T."/>
            <person name="Jagels K."/>
            <person name="Krogh A."/>
            <person name="McLean J."/>
            <person name="Moule S."/>
            <person name="Murphy L.D."/>
            <person name="Oliver S."/>
            <person name="Osborne J."/>
            <person name="Quail M.A."/>
            <person name="Rajandream M.A."/>
            <person name="Rogers J."/>
            <person name="Rutter S."/>
            <person name="Seeger K."/>
            <person name="Skelton S."/>
            <person name="Squares S."/>
            <person name="Squares R."/>
            <person name="Sulston J.E."/>
            <person name="Taylor K."/>
            <person name="Whitehead S."/>
            <person name="Barrell B.G."/>
        </authorList>
    </citation>
    <scope>NUCLEOTIDE SEQUENCE [LARGE SCALE GENOMIC DNA]</scope>
    <source>
        <strain>ATCC 25618 / H37Rv</strain>
    </source>
</reference>
<reference key="2">
    <citation type="journal article" date="2010" name="Microbiology">
        <title>Characterization of the transcriptional regulator Rv3124 of Mycobacterium tuberculosis identifies it as a positive regulator of molybdopterin biosynthesis and defines the functional consequences of a non-synonymous SNP in the Mycobacterium bovis BCG orthologue.</title>
        <authorList>
            <person name="Mendoza Lopez P."/>
            <person name="Golby P."/>
            <person name="Wooff E."/>
            <person name="Nunez Garcia J."/>
            <person name="Garcia Pelayo M.C."/>
            <person name="Conlon K."/>
            <person name="Gema Camacho A."/>
            <person name="Hewinson R.G."/>
            <person name="Polaina J."/>
            <person name="Suarez Garcia A."/>
            <person name="Gordon S.V."/>
        </authorList>
    </citation>
    <scope>INDUCTION</scope>
    <source>
        <strain>ATCC 25618 / H37Rv</strain>
    </source>
</reference>
<feature type="chain" id="PRO_0000152976" description="GTP 3',8-cyclase 1">
    <location>
        <begin position="1"/>
        <end position="359"/>
    </location>
</feature>
<feature type="domain" description="Radical SAM core" evidence="2">
    <location>
        <begin position="21"/>
        <end position="241"/>
    </location>
</feature>
<feature type="binding site" evidence="1">
    <location>
        <position position="30"/>
    </location>
    <ligand>
        <name>GTP</name>
        <dbReference type="ChEBI" id="CHEBI:37565"/>
    </ligand>
</feature>
<feature type="binding site" evidence="1">
    <location>
        <position position="37"/>
    </location>
    <ligand>
        <name>[4Fe-4S] cluster</name>
        <dbReference type="ChEBI" id="CHEBI:49883"/>
        <label>1</label>
        <note>4Fe-4S-S-AdoMet</note>
    </ligand>
</feature>
<feature type="binding site" evidence="1">
    <location>
        <position position="41"/>
    </location>
    <ligand>
        <name>[4Fe-4S] cluster</name>
        <dbReference type="ChEBI" id="CHEBI:49883"/>
        <label>1</label>
        <note>4Fe-4S-S-AdoMet</note>
    </ligand>
</feature>
<feature type="binding site" evidence="1">
    <location>
        <position position="43"/>
    </location>
    <ligand>
        <name>S-adenosyl-L-methionine</name>
        <dbReference type="ChEBI" id="CHEBI:59789"/>
    </ligand>
</feature>
<feature type="binding site" evidence="1">
    <location>
        <position position="44"/>
    </location>
    <ligand>
        <name>[4Fe-4S] cluster</name>
        <dbReference type="ChEBI" id="CHEBI:49883"/>
        <label>1</label>
        <note>4Fe-4S-S-AdoMet</note>
    </ligand>
</feature>
<feature type="binding site" evidence="1">
    <location>
        <position position="80"/>
    </location>
    <ligand>
        <name>GTP</name>
        <dbReference type="ChEBI" id="CHEBI:37565"/>
    </ligand>
</feature>
<feature type="binding site" evidence="1">
    <location>
        <position position="84"/>
    </location>
    <ligand>
        <name>S-adenosyl-L-methionine</name>
        <dbReference type="ChEBI" id="CHEBI:59789"/>
    </ligand>
</feature>
<feature type="binding site" evidence="1">
    <location>
        <position position="115"/>
    </location>
    <ligand>
        <name>GTP</name>
        <dbReference type="ChEBI" id="CHEBI:37565"/>
    </ligand>
</feature>
<feature type="binding site" evidence="1">
    <location>
        <position position="139"/>
    </location>
    <ligand>
        <name>S-adenosyl-L-methionine</name>
        <dbReference type="ChEBI" id="CHEBI:59789"/>
    </ligand>
</feature>
<feature type="binding site" evidence="1">
    <location>
        <position position="176"/>
    </location>
    <ligand>
        <name>GTP</name>
        <dbReference type="ChEBI" id="CHEBI:37565"/>
    </ligand>
</feature>
<feature type="binding site" evidence="1">
    <location>
        <position position="210"/>
    </location>
    <ligand>
        <name>S-adenosyl-L-methionine</name>
        <dbReference type="ChEBI" id="CHEBI:59789"/>
    </ligand>
</feature>
<feature type="binding site" evidence="1">
    <location>
        <position position="273"/>
    </location>
    <ligand>
        <name>[4Fe-4S] cluster</name>
        <dbReference type="ChEBI" id="CHEBI:49883"/>
        <label>2</label>
        <note>4Fe-4S-substrate</note>
    </ligand>
</feature>
<feature type="binding site" evidence="1">
    <location>
        <position position="276"/>
    </location>
    <ligand>
        <name>[4Fe-4S] cluster</name>
        <dbReference type="ChEBI" id="CHEBI:49883"/>
        <label>2</label>
        <note>4Fe-4S-substrate</note>
    </ligand>
</feature>
<feature type="binding site" evidence="1">
    <location>
        <begin position="278"/>
        <end position="280"/>
    </location>
    <ligand>
        <name>GTP</name>
        <dbReference type="ChEBI" id="CHEBI:37565"/>
    </ligand>
</feature>
<feature type="binding site" evidence="1">
    <location>
        <position position="290"/>
    </location>
    <ligand>
        <name>[4Fe-4S] cluster</name>
        <dbReference type="ChEBI" id="CHEBI:49883"/>
        <label>2</label>
        <note>4Fe-4S-substrate</note>
    </ligand>
</feature>
<evidence type="ECO:0000255" key="1">
    <source>
        <dbReference type="HAMAP-Rule" id="MF_01225"/>
    </source>
</evidence>
<evidence type="ECO:0000255" key="2">
    <source>
        <dbReference type="PROSITE-ProRule" id="PRU01266"/>
    </source>
</evidence>
<evidence type="ECO:0000269" key="3">
    <source>
    </source>
</evidence>
<comment type="function">
    <text evidence="1">Catalyzes the cyclization of GTP to (8S)-3',8-cyclo-7,8-dihydroguanosine 5'-triphosphate.</text>
</comment>
<comment type="catalytic activity">
    <reaction evidence="1">
        <text>GTP + AH2 + S-adenosyl-L-methionine = (8S)-3',8-cyclo-7,8-dihydroguanosine 5'-triphosphate + 5'-deoxyadenosine + L-methionine + A + H(+)</text>
        <dbReference type="Rhea" id="RHEA:49576"/>
        <dbReference type="ChEBI" id="CHEBI:13193"/>
        <dbReference type="ChEBI" id="CHEBI:15378"/>
        <dbReference type="ChEBI" id="CHEBI:17319"/>
        <dbReference type="ChEBI" id="CHEBI:17499"/>
        <dbReference type="ChEBI" id="CHEBI:37565"/>
        <dbReference type="ChEBI" id="CHEBI:57844"/>
        <dbReference type="ChEBI" id="CHEBI:59789"/>
        <dbReference type="ChEBI" id="CHEBI:131766"/>
        <dbReference type="EC" id="4.1.99.22"/>
    </reaction>
</comment>
<comment type="cofactor">
    <cofactor evidence="1">
        <name>[4Fe-4S] cluster</name>
        <dbReference type="ChEBI" id="CHEBI:49883"/>
    </cofactor>
    <text evidence="1">Binds 2 [4Fe-4S] clusters. Binds 1 [4Fe-4S] cluster coordinated with 3 cysteines and an exchangeable S-adenosyl-L-methionine and 1 [4Fe-4S] cluster coordinated with 3 cysteines and the GTP-derived substrate.</text>
</comment>
<comment type="pathway">
    <text evidence="1">Cofactor biosynthesis; molybdopterin biosynthesis.</text>
</comment>
<comment type="subunit">
    <text evidence="1">Monomer and homodimer.</text>
</comment>
<comment type="induction">
    <text evidence="3">Expression is positively regulated by the transcriptional regulator MoaR1.</text>
</comment>
<comment type="similarity">
    <text evidence="1">Belongs to the radical SAM superfamily. MoaA family.</text>
</comment>
<name>MOAA1_MYCTU</name>
<keyword id="KW-0004">4Fe-4S</keyword>
<keyword id="KW-0342">GTP-binding</keyword>
<keyword id="KW-0408">Iron</keyword>
<keyword id="KW-0411">Iron-sulfur</keyword>
<keyword id="KW-0456">Lyase</keyword>
<keyword id="KW-0479">Metal-binding</keyword>
<keyword id="KW-0501">Molybdenum cofactor biosynthesis</keyword>
<keyword id="KW-0547">Nucleotide-binding</keyword>
<keyword id="KW-1185">Reference proteome</keyword>
<keyword id="KW-0949">S-adenosyl-L-methionine</keyword>
<gene>
    <name evidence="1" type="primary">moaA1</name>
    <name type="synonym">moaA</name>
    <name type="ordered locus">Rv3109</name>
    <name type="ORF">MTCY164.19</name>
</gene>